<proteinExistence type="inferred from homology"/>
<evidence type="ECO:0000255" key="1">
    <source>
        <dbReference type="HAMAP-Rule" id="MF_01157"/>
    </source>
</evidence>
<protein>
    <recommendedName>
        <fullName evidence="1">DnaA initiator-associating protein DiaA</fullName>
    </recommendedName>
</protein>
<name>DIAA_SALPA</name>
<organism>
    <name type="scientific">Salmonella paratyphi A (strain ATCC 9150 / SARB42)</name>
    <dbReference type="NCBI Taxonomy" id="295319"/>
    <lineage>
        <taxon>Bacteria</taxon>
        <taxon>Pseudomonadati</taxon>
        <taxon>Pseudomonadota</taxon>
        <taxon>Gammaproteobacteria</taxon>
        <taxon>Enterobacterales</taxon>
        <taxon>Enterobacteriaceae</taxon>
        <taxon>Salmonella</taxon>
    </lineage>
</organism>
<dbReference type="EMBL" id="CP000026">
    <property type="protein sequence ID" value="AAV78964.1"/>
    <property type="molecule type" value="Genomic_DNA"/>
</dbReference>
<dbReference type="RefSeq" id="WP_000893480.1">
    <property type="nucleotide sequence ID" value="NC_006511.1"/>
</dbReference>
<dbReference type="SMR" id="Q5PL92"/>
<dbReference type="KEGG" id="spt:SPA3135"/>
<dbReference type="HOGENOM" id="CLU_080999_3_1_6"/>
<dbReference type="Proteomes" id="UP000008185">
    <property type="component" value="Chromosome"/>
</dbReference>
<dbReference type="GO" id="GO:0097367">
    <property type="term" value="F:carbohydrate derivative binding"/>
    <property type="evidence" value="ECO:0007669"/>
    <property type="project" value="InterPro"/>
</dbReference>
<dbReference type="GO" id="GO:1901135">
    <property type="term" value="P:carbohydrate derivative metabolic process"/>
    <property type="evidence" value="ECO:0007669"/>
    <property type="project" value="InterPro"/>
</dbReference>
<dbReference type="GO" id="GO:0006260">
    <property type="term" value="P:DNA replication"/>
    <property type="evidence" value="ECO:0007669"/>
    <property type="project" value="UniProtKB-UniRule"/>
</dbReference>
<dbReference type="CDD" id="cd05006">
    <property type="entry name" value="SIS_GmhA"/>
    <property type="match status" value="1"/>
</dbReference>
<dbReference type="FunFam" id="3.40.50.10490:FF:000006">
    <property type="entry name" value="DnaA initiator-associating protein DiaA"/>
    <property type="match status" value="1"/>
</dbReference>
<dbReference type="Gene3D" id="3.40.50.10490">
    <property type="entry name" value="Glucose-6-phosphate isomerase like protein, domain 1"/>
    <property type="match status" value="1"/>
</dbReference>
<dbReference type="HAMAP" id="MF_01157">
    <property type="entry name" value="SIS_DiaA"/>
    <property type="match status" value="1"/>
</dbReference>
<dbReference type="InterPro" id="IPR023070">
    <property type="entry name" value="DiaA"/>
</dbReference>
<dbReference type="InterPro" id="IPR035461">
    <property type="entry name" value="GmhA/DiaA"/>
</dbReference>
<dbReference type="InterPro" id="IPR001347">
    <property type="entry name" value="SIS_dom"/>
</dbReference>
<dbReference type="InterPro" id="IPR046348">
    <property type="entry name" value="SIS_dom_sf"/>
</dbReference>
<dbReference type="InterPro" id="IPR050099">
    <property type="entry name" value="SIS_GmhA/DiaA_subfam"/>
</dbReference>
<dbReference type="NCBIfam" id="NF008138">
    <property type="entry name" value="PRK10886.1"/>
    <property type="match status" value="1"/>
</dbReference>
<dbReference type="PANTHER" id="PTHR30390:SF6">
    <property type="entry name" value="DNAA INITIATOR-ASSOCIATING PROTEIN DIAA"/>
    <property type="match status" value="1"/>
</dbReference>
<dbReference type="PANTHER" id="PTHR30390">
    <property type="entry name" value="SEDOHEPTULOSE 7-PHOSPHATE ISOMERASE / DNAA INITIATOR-ASSOCIATING FACTOR FOR REPLICATION INITIATION"/>
    <property type="match status" value="1"/>
</dbReference>
<dbReference type="Pfam" id="PF13580">
    <property type="entry name" value="SIS_2"/>
    <property type="match status" value="1"/>
</dbReference>
<dbReference type="SUPFAM" id="SSF53697">
    <property type="entry name" value="SIS domain"/>
    <property type="match status" value="1"/>
</dbReference>
<dbReference type="PROSITE" id="PS51464">
    <property type="entry name" value="SIS"/>
    <property type="match status" value="1"/>
</dbReference>
<sequence>MLERIKVCFTESIQTQIAAAEALPDAISRAAMTLVHSLLNGNKILCCGNGTSAANAQHFAASMINRFETERPSLPAIALNTDNVVLTAIANDRLHDEVYAKQVRALGHAGDVLLAISTRGNSRDIVKAVEAAVTRDMTIVALTGYDGGELAGLLGPQDVEIRIPSHHSARIQEMHMLTVNCLCDLIDNTLFLHQDD</sequence>
<gene>
    <name evidence="1" type="primary">diaA</name>
    <name type="ordered locus">SPA3135</name>
</gene>
<reference key="1">
    <citation type="journal article" date="2004" name="Nat. Genet.">
        <title>Comparison of genome degradation in Paratyphi A and Typhi, human-restricted serovars of Salmonella enterica that cause typhoid.</title>
        <authorList>
            <person name="McClelland M."/>
            <person name="Sanderson K.E."/>
            <person name="Clifton S.W."/>
            <person name="Latreille P."/>
            <person name="Porwollik S."/>
            <person name="Sabo A."/>
            <person name="Meyer R."/>
            <person name="Bieri T."/>
            <person name="Ozersky P."/>
            <person name="McLellan M."/>
            <person name="Harkins C.R."/>
            <person name="Wang C."/>
            <person name="Nguyen C."/>
            <person name="Berghoff A."/>
            <person name="Elliott G."/>
            <person name="Kohlberg S."/>
            <person name="Strong C."/>
            <person name="Du F."/>
            <person name="Carter J."/>
            <person name="Kremizki C."/>
            <person name="Layman D."/>
            <person name="Leonard S."/>
            <person name="Sun H."/>
            <person name="Fulton L."/>
            <person name="Nash W."/>
            <person name="Miner T."/>
            <person name="Minx P."/>
            <person name="Delehaunty K."/>
            <person name="Fronick C."/>
            <person name="Magrini V."/>
            <person name="Nhan M."/>
            <person name="Warren W."/>
            <person name="Florea L."/>
            <person name="Spieth J."/>
            <person name="Wilson R.K."/>
        </authorList>
    </citation>
    <scope>NUCLEOTIDE SEQUENCE [LARGE SCALE GENOMIC DNA]</scope>
    <source>
        <strain>ATCC 9150 / SARB42</strain>
    </source>
</reference>
<accession>Q5PL92</accession>
<keyword id="KW-0235">DNA replication</keyword>
<comment type="function">
    <text evidence="1">Required for the timely initiation of chromosomal replication via direct interactions with the DnaA initiator protein.</text>
</comment>
<comment type="subunit">
    <text evidence="1">Homotetramer; dimer of dimers.</text>
</comment>
<comment type="similarity">
    <text evidence="1">Belongs to the SIS family. DiaA subfamily.</text>
</comment>
<feature type="chain" id="PRO_1000065547" description="DnaA initiator-associating protein DiaA">
    <location>
        <begin position="1"/>
        <end position="196"/>
    </location>
</feature>
<feature type="domain" description="SIS" evidence="1">
    <location>
        <begin position="34"/>
        <end position="196"/>
    </location>
</feature>